<proteinExistence type="evidence at transcript level"/>
<feature type="chain" id="PRO_0000458171" description="Highly reducing polyketide synthase 40">
    <location>
        <begin position="1"/>
        <end position="2474"/>
    </location>
</feature>
<feature type="domain" description="Ketosynthase family 3 (KS3)" evidence="3">
    <location>
        <begin position="1"/>
        <end position="294"/>
    </location>
</feature>
<feature type="domain" description="Malonyl-CoA:ACP transacylase (MAT)" evidence="1 7">
    <location>
        <begin position="459"/>
        <end position="798"/>
    </location>
</feature>
<feature type="domain" description="PKS/mFAS DH" evidence="4">
    <location>
        <begin position="864"/>
        <end position="1182"/>
    </location>
</feature>
<feature type="domain" description="Enoyl reductase (ER)" evidence="1 7">
    <location>
        <begin position="1770"/>
        <end position="2063"/>
    </location>
</feature>
<feature type="domain" description="Ketoreductase (KR)" evidence="1 7">
    <location>
        <begin position="2087"/>
        <end position="2263"/>
    </location>
</feature>
<feature type="domain" description="Carrier" evidence="2 7">
    <location>
        <begin position="2385"/>
        <end position="2462"/>
    </location>
</feature>
<feature type="region of interest" description="N-terminal hotdog fold" evidence="4">
    <location>
        <begin position="864"/>
        <end position="998"/>
    </location>
</feature>
<feature type="region of interest" description="C-terminal hotdog fold" evidence="4">
    <location>
        <begin position="1027"/>
        <end position="1182"/>
    </location>
</feature>
<feature type="region of interest" description="Methyltransferase (CMet) domain" evidence="1 7">
    <location>
        <begin position="1232"/>
        <end position="1535"/>
    </location>
</feature>
<feature type="active site" description="For beta-ketoacyl synthase activity" evidence="3">
    <location>
        <position position="42"/>
    </location>
</feature>
<feature type="active site" description="For beta-ketoacyl synthase activity" evidence="3">
    <location>
        <position position="177"/>
    </location>
</feature>
<feature type="active site" description="For beta-ketoacyl synthase activity" evidence="3">
    <location>
        <position position="217"/>
    </location>
</feature>
<feature type="active site" description="Proton acceptor; for dehydratase activity" evidence="4">
    <location>
        <position position="896"/>
    </location>
</feature>
<feature type="active site" description="Proton donor; for dehydratase activity" evidence="4">
    <location>
        <position position="1093"/>
    </location>
</feature>
<feature type="modified residue" description="O-(pantetheine 4'-phosphoryl)serine" evidence="2">
    <location>
        <position position="2422"/>
    </location>
</feature>
<gene>
    <name evidence="6" type="primary">FPY1</name>
    <name evidence="6" type="synonym">PKS40</name>
    <name type="ORF">FMAN_00008</name>
</gene>
<sequence length="2474" mass="268778">MFKETEIQQRYFATGTGTTMLANRLSYFYDLHGPSISLDTACSSSLNACHLACNSLRLGECDMALAAGCNLFYNPDTIIPLTALGFLSPDGRCYSFDERANGYSRGEGFGMVVLKRLSDAIRDGDCIRAIVRGSSSNQDGNSPGITQPTRQAQVDLINAAYQSAGLSKTQTRFFEAHGTGTPVGDPIEASAISGAFSEYRSEQEPMVVGAVKTNIGHLEGSAGIAGLIKAIMVLEKGIIPPNMGFQTPNPKIPVHDWHLKFPTKPEAWPSKGLRRASINAFGYGGSNAHIIIDDAYHYLLEHGLKGKHQTIEFPPVEGLRPSINGTNGTNGHLNGITNNHSNGHQSTSGSSDDEYILVKRFKGYAPPCRSFFFSTFDEAGAARMAQAYREFLDSTNKSIVAGSEEEQGFLSDLSYTLINHRTSFPWRFSIVADSIAALTNKLEGNPSPVRATADPKLGFVFTGQGAQWYAMGRELLSAYPTFSTSIFAADLYLRELGCPWSLVGELLQNQDKSRIDDPELSQPICTALQVALVDLLASWGIKPAAVVGHSSGEIGAAYATGAISQESAWRLAFYRGALSSRLAKSPDHTNGAMLSVAMSSSSAMSYLEEHVGSAAGRDIVVACINSPRNVTLSGSAVYIDKIKAAADSGGIFARKLKVDNSYHSPLMATIADEYRSLIGDLEAGTNISPGKVAPVFYSSLGGTVISASALKNRDHWVDNLVSPVQFSKAFSLMCSNTSSSAPVKKLGSSAKATVKPPKITQVLEIGPHAALRGPIREIMELTPEVSGIGYESVLRRGTSAVDTALGAANWLWCRGYEVDMSDASIAKDSSLVVNAPGYPFNHSNIYWNESRISKGYRFRPAMRHELLGAPVPDWDPANAVWRNYLRLSENPWVKHHRITGATIYPAAGMLVMAIEASRQMADISRVVKGFRILDARFNVALRVPATQNGLETHFYMQPSRDHPDTVARTVRKFSLSSYEGGEWREHCHGLVVTEYEQPYTVVDDGREDFEFQEACKNRLAGVEKASKVETSFRQLYEHLSTVGLDFGATFQTLRDIRCGDIGEAVATVERQDLESLMPLGYLQDHLIHPTVLDGILQSIIVSLTKGGREIDQVMVPSEIGDLWVSADPSTSKFDAIRVSCSGKFLGIRQAEARIVGIDVDIGKAVCTVDNFVITTVARSEGASSSDAARRLCFNLDYKVDPALLDQETADKTIQPDAKCGATTQQAQLIQEVEMMCFLYIKRFWDRIYNENRDAKSVPYHKKYIAWIKHQLEKYDAGLIPHAMPEWRERAADDQYISQMEIKLLTDGSAEGKLVVNVGRELPNILAGKSDALELLFKDKLVENVYRSGVGAEIGYDRMVAYIDALAHKNPALRVLEVGAGTGGATRPILKCLTTQDISIGFFENAREMFKDSAARMSFRALNIEENLEQQGFSGPGEQYDVICAANVIHATRNLEATLSNARKLLKPGGKLILYEMTNTGMIRTGFAFGLLPGWWLSVEDFRQFTPLAAPNDWSRSLKASGFSGIDLHIYDFPDHRHQMVSVLICTALGDGSEENTPTSSYSSSPIKIITCGAGSGSATQESLATVLEKQASSLSTSVAVVNLQDAVADLKDLQQTRCIFLGDLESNFLEHVHDDDYEAFQKLISSTKTLFWVNQGGGPSPKNPGADMVTGFARCMRAENPGLNFVTLSIDDLGSLDKTSSIILRLLSTGGGNENTFFEKDGAVYIPRITEANTVNHLIAAKTKGEPARSETWQDASNGRALTLQCAVPGLLDSLQFQDDELYEKPLRPYDVEVIGEAFGQECAGVVTRVGTDVERVSVGDSVCGLLRGTFKTFARGSQWQFAKIPSTIDYAVAASVPVVYTTAYYGLHDLARLQAGESILIHWGAGGVGQAAIQLAKAVGAEVFVTVGSIEKRDFVHEHYGIPLHNVLSSRDLSFVHGIKRLTDGRGVDVILNSTAGQTLRASWDCIAPYGRFIEIGKVDIFANAGLPMGPFKKSVTFSFFDIGLISLERGRLFSRVLQDVVDLLAKGSITPPQPLHVYSYSDIQEAFRIMQSGSHMGKLVLKAQDDDHVMVEPSRKPTYYFDPDASYLLSGGLGGLGRSAARWMASRGAKNLILLSRSGTTRPAAQELMKELAAAGVTASAPQCDVSDRAALERVLNDCAKTMPPIKGCIQGSMVLKDSIFSNMSPEDYYTAVRPKVVASRNLHELLPQDMDFFILLSSASGVVGNRGQSNYCVGNTYQDSLARHRVALGLPGVAVDLGMILSVGFAAENQESMANLRQEGFNAMREDEFLALLDMLCGPNGTYSTNANREMEASSFAQIAVGLEAPATLRIKGIPEPAWMTDPLFKHLYQIRGEGDHEGEGDGEGSATSCSTLLPAAASLADAAKIVSAAIVQKLCKALSSSERDIDVSKPLHSYGVDSLVAVELRAWFMKEVGSDVAVFDIMSGQSLEELAELAAKRSSFASFDDEKEAD</sequence>
<accession>A0A1L7U3D7</accession>
<dbReference type="EC" id="2.3.1.-" evidence="7"/>
<dbReference type="EMBL" id="FCQH01000013">
    <property type="protein sequence ID" value="CVL02475.1"/>
    <property type="molecule type" value="Genomic_DNA"/>
</dbReference>
<dbReference type="SMR" id="A0A1L7U3D7"/>
<dbReference type="VEuPathDB" id="FungiDB:FMAN_00008"/>
<dbReference type="Proteomes" id="UP000184255">
    <property type="component" value="Unassembled WGS sequence"/>
</dbReference>
<dbReference type="GO" id="GO:0004312">
    <property type="term" value="F:fatty acid synthase activity"/>
    <property type="evidence" value="ECO:0007669"/>
    <property type="project" value="TreeGrafter"/>
</dbReference>
<dbReference type="GO" id="GO:0008168">
    <property type="term" value="F:methyltransferase activity"/>
    <property type="evidence" value="ECO:0007669"/>
    <property type="project" value="UniProtKB-KW"/>
</dbReference>
<dbReference type="GO" id="GO:0016491">
    <property type="term" value="F:oxidoreductase activity"/>
    <property type="evidence" value="ECO:0007669"/>
    <property type="project" value="UniProtKB-KW"/>
</dbReference>
<dbReference type="GO" id="GO:0031177">
    <property type="term" value="F:phosphopantetheine binding"/>
    <property type="evidence" value="ECO:0007669"/>
    <property type="project" value="InterPro"/>
</dbReference>
<dbReference type="GO" id="GO:0008270">
    <property type="term" value="F:zinc ion binding"/>
    <property type="evidence" value="ECO:0007669"/>
    <property type="project" value="InterPro"/>
</dbReference>
<dbReference type="GO" id="GO:0006633">
    <property type="term" value="P:fatty acid biosynthetic process"/>
    <property type="evidence" value="ECO:0007669"/>
    <property type="project" value="TreeGrafter"/>
</dbReference>
<dbReference type="GO" id="GO:0032259">
    <property type="term" value="P:methylation"/>
    <property type="evidence" value="ECO:0007669"/>
    <property type="project" value="UniProtKB-KW"/>
</dbReference>
<dbReference type="GO" id="GO:0030639">
    <property type="term" value="P:polyketide biosynthetic process"/>
    <property type="evidence" value="ECO:0007669"/>
    <property type="project" value="UniProtKB-ARBA"/>
</dbReference>
<dbReference type="CDD" id="cd02440">
    <property type="entry name" value="AdoMet_MTases"/>
    <property type="match status" value="1"/>
</dbReference>
<dbReference type="CDD" id="cd05195">
    <property type="entry name" value="enoyl_red"/>
    <property type="match status" value="1"/>
</dbReference>
<dbReference type="CDD" id="cd00833">
    <property type="entry name" value="PKS"/>
    <property type="match status" value="1"/>
</dbReference>
<dbReference type="FunFam" id="3.40.50.720:FF:000209">
    <property type="entry name" value="Polyketide synthase Pks12"/>
    <property type="match status" value="1"/>
</dbReference>
<dbReference type="Gene3D" id="3.30.70.3290">
    <property type="match status" value="1"/>
</dbReference>
<dbReference type="Gene3D" id="3.40.47.10">
    <property type="match status" value="1"/>
</dbReference>
<dbReference type="Gene3D" id="1.10.1200.10">
    <property type="entry name" value="ACP-like"/>
    <property type="match status" value="1"/>
</dbReference>
<dbReference type="Gene3D" id="3.40.366.10">
    <property type="entry name" value="Malonyl-Coenzyme A Acyl Carrier Protein, domain 2"/>
    <property type="match status" value="1"/>
</dbReference>
<dbReference type="Gene3D" id="3.90.180.10">
    <property type="entry name" value="Medium-chain alcohol dehydrogenases, catalytic domain"/>
    <property type="match status" value="1"/>
</dbReference>
<dbReference type="Gene3D" id="3.40.50.720">
    <property type="entry name" value="NAD(P)-binding Rossmann-like Domain"/>
    <property type="match status" value="3"/>
</dbReference>
<dbReference type="Gene3D" id="3.10.129.110">
    <property type="entry name" value="Polyketide synthase dehydratase"/>
    <property type="match status" value="1"/>
</dbReference>
<dbReference type="Gene3D" id="3.40.50.150">
    <property type="entry name" value="Vaccinia Virus protein VP39"/>
    <property type="match status" value="1"/>
</dbReference>
<dbReference type="InterPro" id="IPR001227">
    <property type="entry name" value="Ac_transferase_dom_sf"/>
</dbReference>
<dbReference type="InterPro" id="IPR036736">
    <property type="entry name" value="ACP-like_sf"/>
</dbReference>
<dbReference type="InterPro" id="IPR014043">
    <property type="entry name" value="Acyl_transferase_dom"/>
</dbReference>
<dbReference type="InterPro" id="IPR016035">
    <property type="entry name" value="Acyl_Trfase/lysoPLipase"/>
</dbReference>
<dbReference type="InterPro" id="IPR011032">
    <property type="entry name" value="GroES-like_sf"/>
</dbReference>
<dbReference type="InterPro" id="IPR014031">
    <property type="entry name" value="Ketoacyl_synth_C"/>
</dbReference>
<dbReference type="InterPro" id="IPR014030">
    <property type="entry name" value="Ketoacyl_synth_N"/>
</dbReference>
<dbReference type="InterPro" id="IPR016036">
    <property type="entry name" value="Malonyl_transacylase_ACP-bd"/>
</dbReference>
<dbReference type="InterPro" id="IPR013217">
    <property type="entry name" value="Methyltransf_12"/>
</dbReference>
<dbReference type="InterPro" id="IPR036291">
    <property type="entry name" value="NAD(P)-bd_dom_sf"/>
</dbReference>
<dbReference type="InterPro" id="IPR056501">
    <property type="entry name" value="NAD-bd_HRPKS_sdrA"/>
</dbReference>
<dbReference type="InterPro" id="IPR032821">
    <property type="entry name" value="PKS_assoc"/>
</dbReference>
<dbReference type="InterPro" id="IPR020841">
    <property type="entry name" value="PKS_Beta-ketoAc_synthase_dom"/>
</dbReference>
<dbReference type="InterPro" id="IPR042104">
    <property type="entry name" value="PKS_dehydratase_sf"/>
</dbReference>
<dbReference type="InterPro" id="IPR020807">
    <property type="entry name" value="PKS_DH"/>
</dbReference>
<dbReference type="InterPro" id="IPR049551">
    <property type="entry name" value="PKS_DH_C"/>
</dbReference>
<dbReference type="InterPro" id="IPR049552">
    <property type="entry name" value="PKS_DH_N"/>
</dbReference>
<dbReference type="InterPro" id="IPR020843">
    <property type="entry name" value="PKS_ER"/>
</dbReference>
<dbReference type="InterPro" id="IPR013968">
    <property type="entry name" value="PKS_KR"/>
</dbReference>
<dbReference type="InterPro" id="IPR049900">
    <property type="entry name" value="PKS_mFAS_DH"/>
</dbReference>
<dbReference type="InterPro" id="IPR050091">
    <property type="entry name" value="PKS_NRPS_Biosynth_Enz"/>
</dbReference>
<dbReference type="InterPro" id="IPR020806">
    <property type="entry name" value="PKS_PP-bd"/>
</dbReference>
<dbReference type="InterPro" id="IPR009081">
    <property type="entry name" value="PP-bd_ACP"/>
</dbReference>
<dbReference type="InterPro" id="IPR006162">
    <property type="entry name" value="Ppantetheine_attach_site"/>
</dbReference>
<dbReference type="InterPro" id="IPR002364">
    <property type="entry name" value="Quin_OxRdtase/zeta-crystal_CS"/>
</dbReference>
<dbReference type="InterPro" id="IPR029063">
    <property type="entry name" value="SAM-dependent_MTases_sf"/>
</dbReference>
<dbReference type="InterPro" id="IPR016039">
    <property type="entry name" value="Thiolase-like"/>
</dbReference>
<dbReference type="PANTHER" id="PTHR43775:SF29">
    <property type="entry name" value="ASPERFURANONE POLYKETIDE SYNTHASE AFOG-RELATED"/>
    <property type="match status" value="1"/>
</dbReference>
<dbReference type="PANTHER" id="PTHR43775">
    <property type="entry name" value="FATTY ACID SYNTHASE"/>
    <property type="match status" value="1"/>
</dbReference>
<dbReference type="Pfam" id="PF23297">
    <property type="entry name" value="ACP_SdgA_C"/>
    <property type="match status" value="1"/>
</dbReference>
<dbReference type="Pfam" id="PF00698">
    <property type="entry name" value="Acyl_transf_1"/>
    <property type="match status" value="1"/>
</dbReference>
<dbReference type="Pfam" id="PF13602">
    <property type="entry name" value="ADH_zinc_N_2"/>
    <property type="match status" value="1"/>
</dbReference>
<dbReference type="Pfam" id="PF16197">
    <property type="entry name" value="KAsynt_C_assoc"/>
    <property type="match status" value="1"/>
</dbReference>
<dbReference type="Pfam" id="PF00109">
    <property type="entry name" value="ketoacyl-synt"/>
    <property type="match status" value="1"/>
</dbReference>
<dbReference type="Pfam" id="PF02801">
    <property type="entry name" value="Ketoacyl-synt_C"/>
    <property type="match status" value="1"/>
</dbReference>
<dbReference type="Pfam" id="PF08659">
    <property type="entry name" value="KR"/>
    <property type="match status" value="1"/>
</dbReference>
<dbReference type="Pfam" id="PF08242">
    <property type="entry name" value="Methyltransf_12"/>
    <property type="match status" value="1"/>
</dbReference>
<dbReference type="Pfam" id="PF23114">
    <property type="entry name" value="NAD-bd_HRPKS_sdrA"/>
    <property type="match status" value="1"/>
</dbReference>
<dbReference type="Pfam" id="PF21089">
    <property type="entry name" value="PKS_DH_N"/>
    <property type="match status" value="1"/>
</dbReference>
<dbReference type="Pfam" id="PF14765">
    <property type="entry name" value="PS-DH"/>
    <property type="match status" value="1"/>
</dbReference>
<dbReference type="SMART" id="SM00827">
    <property type="entry name" value="PKS_AT"/>
    <property type="match status" value="1"/>
</dbReference>
<dbReference type="SMART" id="SM00826">
    <property type="entry name" value="PKS_DH"/>
    <property type="match status" value="1"/>
</dbReference>
<dbReference type="SMART" id="SM00829">
    <property type="entry name" value="PKS_ER"/>
    <property type="match status" value="1"/>
</dbReference>
<dbReference type="SMART" id="SM00822">
    <property type="entry name" value="PKS_KR"/>
    <property type="match status" value="1"/>
</dbReference>
<dbReference type="SMART" id="SM00825">
    <property type="entry name" value="PKS_KS"/>
    <property type="match status" value="1"/>
</dbReference>
<dbReference type="SMART" id="SM00823">
    <property type="entry name" value="PKS_PP"/>
    <property type="match status" value="1"/>
</dbReference>
<dbReference type="SUPFAM" id="SSF47336">
    <property type="entry name" value="ACP-like"/>
    <property type="match status" value="1"/>
</dbReference>
<dbReference type="SUPFAM" id="SSF52151">
    <property type="entry name" value="FabD/lysophospholipase-like"/>
    <property type="match status" value="1"/>
</dbReference>
<dbReference type="SUPFAM" id="SSF50129">
    <property type="entry name" value="GroES-like"/>
    <property type="match status" value="1"/>
</dbReference>
<dbReference type="SUPFAM" id="SSF51735">
    <property type="entry name" value="NAD(P)-binding Rossmann-fold domains"/>
    <property type="match status" value="2"/>
</dbReference>
<dbReference type="SUPFAM" id="SSF55048">
    <property type="entry name" value="Probable ACP-binding domain of malonyl-CoA ACP transacylase"/>
    <property type="match status" value="1"/>
</dbReference>
<dbReference type="SUPFAM" id="SSF53335">
    <property type="entry name" value="S-adenosyl-L-methionine-dependent methyltransferases"/>
    <property type="match status" value="1"/>
</dbReference>
<dbReference type="SUPFAM" id="SSF53901">
    <property type="entry name" value="Thiolase-like"/>
    <property type="match status" value="2"/>
</dbReference>
<dbReference type="PROSITE" id="PS50075">
    <property type="entry name" value="CARRIER"/>
    <property type="match status" value="1"/>
</dbReference>
<dbReference type="PROSITE" id="PS52004">
    <property type="entry name" value="KS3_2"/>
    <property type="match status" value="1"/>
</dbReference>
<dbReference type="PROSITE" id="PS00012">
    <property type="entry name" value="PHOSPHOPANTETHEINE"/>
    <property type="match status" value="1"/>
</dbReference>
<dbReference type="PROSITE" id="PS52019">
    <property type="entry name" value="PKS_MFAS_DH"/>
    <property type="match status" value="1"/>
</dbReference>
<evidence type="ECO:0000255" key="1"/>
<evidence type="ECO:0000255" key="2">
    <source>
        <dbReference type="PROSITE-ProRule" id="PRU00258"/>
    </source>
</evidence>
<evidence type="ECO:0000255" key="3">
    <source>
        <dbReference type="PROSITE-ProRule" id="PRU01348"/>
    </source>
</evidence>
<evidence type="ECO:0000255" key="4">
    <source>
        <dbReference type="PROSITE-ProRule" id="PRU01363"/>
    </source>
</evidence>
<evidence type="ECO:0000269" key="5">
    <source ref="2"/>
</evidence>
<evidence type="ECO:0000303" key="6">
    <source ref="2"/>
</evidence>
<evidence type="ECO:0000305" key="7">
    <source ref="2"/>
</evidence>
<comment type="function">
    <text evidence="5 7">Highly reducing polyketide synthase; part of the gene cluster that mediates the biosynthesis of the gamma-pyrones fusapyrone (FPY) and deoxyfusapyrone (dFPY) (Ref.2). FPY is an undecaketide and thus likely synthesized by the polyketide synthase FPY1 from acetyl-CoA functioning as starter unit and the addition of 10 malonyl-CoA extender units by successive Claisen-condensations. Next to this, FPY shares some rare features: C-glycosylated 4-deoxyglucose at C-3, a gem-dimethyl group at C-13, and an alpha-beta to beta-gamma double bond shift at C-20. During FPY biosynthesis mono-C-methyl groups are transferred to the tetra-, penta-, hexa- and heptaketide, while two C-methyl groups are transferred to the nonaketide, suggesting that the CMet domain is programmed to selectively catalyze two successive C-alpha-methylation reactions of the nonaketide, while other alpha-carbons are non- or mono-methylated only. While the origin of the 4'-deoxyglucose moiety remains opaque, its transfer to C-3 is most likely mediated by the C-glycosyltransferase FPY2. Next to this, the hydroxyl group present at C-33 and discriminating between FPY and dFPY, is likely to be installed by the cytochrome P450 monooxygenase FPY7. No putative function can be predicted for the remaining genes FPY3-FPY6 (Probable).</text>
</comment>
<comment type="cofactor">
    <cofactor evidence="2">
        <name>pantetheine 4'-phosphate</name>
        <dbReference type="ChEBI" id="CHEBI:47942"/>
    </cofactor>
</comment>
<comment type="pathway">
    <text evidence="5">Secondary metabolite biosynthesis.</text>
</comment>
<comment type="induction">
    <text evidence="5">Expression is induced in the presence of 6mM glutamine.</text>
</comment>
<comment type="domain">
    <text evidence="7">Multidomain protein; including a ketosynthase (KS) that catalyzes repeated decarboxylative condensation to elongate the polyketide backbone; a malonyl-CoA:ACP transacylase (MAT) that selects and transfers the extender unit malonyl-CoA; a dehydratase (DH) domain that reduces hydroxyl groups to enoyl groups; a methyltransferase (CMeT) domain responsible for the incorporation of methyl groups; an enoylreductase (ER) domain that reduces enoyl groups to alkyl group; a ketoreductase (KR) domain that catalyzes beta-ketoreduction steps; and an acyl-carrier protein (ACP) that serves as the tether of the growing and completed polyketide via its phosphopantetheinyl arm.</text>
</comment>
<comment type="disruption phenotype">
    <text evidence="5">Abolishes the biosynthesis of fusapyrone and deoxyfusapyrone.</text>
</comment>
<organism>
    <name type="scientific">Fusarium mangiferae</name>
    <name type="common">Mango malformation disease fungus</name>
    <dbReference type="NCBI Taxonomy" id="192010"/>
    <lineage>
        <taxon>Eukaryota</taxon>
        <taxon>Fungi</taxon>
        <taxon>Dikarya</taxon>
        <taxon>Ascomycota</taxon>
        <taxon>Pezizomycotina</taxon>
        <taxon>Sordariomycetes</taxon>
        <taxon>Hypocreomycetidae</taxon>
        <taxon>Hypocreales</taxon>
        <taxon>Nectriaceae</taxon>
        <taxon>Fusarium</taxon>
        <taxon>Fusarium fujikuroi species complex</taxon>
    </lineage>
</organism>
<protein>
    <recommendedName>
        <fullName evidence="6">Highly reducing polyketide synthase 40</fullName>
        <shortName evidence="6">PKS40</shortName>
        <ecNumber evidence="7">2.3.1.-</ecNumber>
    </recommendedName>
    <alternativeName>
        <fullName evidence="6">Fusapyrone biosynthesis cluster protein 1</fullName>
    </alternativeName>
</protein>
<name>FPY1_FUSMA</name>
<reference key="1">
    <citation type="journal article" date="2016" name="Genome Biol. Evol.">
        <title>Comparative 'omics' of the Fusarium fujikuroi species complex highlights differences in genetic potential and metabolite synthesis.</title>
        <authorList>
            <person name="Niehaus E.-M."/>
            <person name="Muensterkoetter M."/>
            <person name="Proctor R.H."/>
            <person name="Brown D.W."/>
            <person name="Sharon A."/>
            <person name="Idan Y."/>
            <person name="Oren-Young L."/>
            <person name="Sieber C.M."/>
            <person name="Novak O."/>
            <person name="Pencik A."/>
            <person name="Tarkowska D."/>
            <person name="Hromadova K."/>
            <person name="Freeman S."/>
            <person name="Maymon M."/>
            <person name="Elazar M."/>
            <person name="Youssef S.A."/>
            <person name="El-Shabrawy E.S.M."/>
            <person name="Shalaby A.B.A."/>
            <person name="Houterman P."/>
            <person name="Brock N.L."/>
            <person name="Burkhardt I."/>
            <person name="Tsavkelova E.A."/>
            <person name="Dickschat J.S."/>
            <person name="Galuszka P."/>
            <person name="Gueldener U."/>
            <person name="Tudzynski B."/>
        </authorList>
    </citation>
    <scope>NUCLEOTIDE SEQUENCE [LARGE SCALE GENOMIC DNA]</scope>
    <source>
        <strain>MRC7560</strain>
    </source>
</reference>
<reference key="2">
    <citation type="journal article" date="2021" name="Front. Fungal Biol.">
        <title>Biosynthesis of fusapyrone depends on the H3K9 methyltransferase, FmKmt1, in Fusarium mangiferae.</title>
        <authorList>
            <person name="Atanasoff-Kardjalieff A.K."/>
            <person name="Luenne F."/>
            <person name="Kalinina S."/>
            <person name="Strauss J."/>
            <person name="Humpf H.U."/>
            <person name="Studt-Reinhold L."/>
        </authorList>
    </citation>
    <scope>FUNCTION</scope>
    <scope>INDUCTION</scope>
    <scope>DISRUPTION PHENOTYPE</scope>
    <scope>PATHWAY</scope>
</reference>
<keyword id="KW-0012">Acyltransferase</keyword>
<keyword id="KW-0489">Methyltransferase</keyword>
<keyword id="KW-0511">Multifunctional enzyme</keyword>
<keyword id="KW-0521">NADP</keyword>
<keyword id="KW-0560">Oxidoreductase</keyword>
<keyword id="KW-0596">Phosphopantetheine</keyword>
<keyword id="KW-0597">Phosphoprotein</keyword>
<keyword id="KW-0949">S-adenosyl-L-methionine</keyword>
<keyword id="KW-0808">Transferase</keyword>